<keyword id="KW-0997">Cell inner membrane</keyword>
<keyword id="KW-1003">Cell membrane</keyword>
<keyword id="KW-0143">Chaperone</keyword>
<keyword id="KW-0472">Membrane</keyword>
<keyword id="KW-0653">Protein transport</keyword>
<keyword id="KW-1185">Reference proteome</keyword>
<keyword id="KW-0812">Transmembrane</keyword>
<keyword id="KW-1133">Transmembrane helix</keyword>
<keyword id="KW-0813">Transport</keyword>
<feature type="chain" id="PRO_1000187624" description="Membrane protein insertase YidC">
    <location>
        <begin position="1"/>
        <end position="620"/>
    </location>
</feature>
<feature type="transmembrane region" description="Helical" evidence="1">
    <location>
        <begin position="7"/>
        <end position="27"/>
    </location>
</feature>
<feature type="transmembrane region" description="Helical" evidence="1">
    <location>
        <begin position="399"/>
        <end position="419"/>
    </location>
</feature>
<feature type="transmembrane region" description="Helical" evidence="1">
    <location>
        <begin position="469"/>
        <end position="489"/>
    </location>
</feature>
<feature type="transmembrane region" description="Helical" evidence="1">
    <location>
        <begin position="514"/>
        <end position="534"/>
    </location>
</feature>
<feature type="transmembrane region" description="Helical" evidence="1">
    <location>
        <begin position="560"/>
        <end position="580"/>
    </location>
</feature>
<feature type="region of interest" description="Disordered" evidence="2">
    <location>
        <begin position="37"/>
        <end position="77"/>
    </location>
</feature>
<feature type="compositionally biased region" description="Low complexity" evidence="2">
    <location>
        <begin position="37"/>
        <end position="58"/>
    </location>
</feature>
<gene>
    <name evidence="1" type="primary">yidC</name>
    <name type="ordered locus">Avi_0455</name>
</gene>
<reference key="1">
    <citation type="journal article" date="2009" name="J. Bacteriol.">
        <title>Genome sequences of three Agrobacterium biovars help elucidate the evolution of multichromosome genomes in bacteria.</title>
        <authorList>
            <person name="Slater S.C."/>
            <person name="Goldman B.S."/>
            <person name="Goodner B."/>
            <person name="Setubal J.C."/>
            <person name="Farrand S.K."/>
            <person name="Nester E.W."/>
            <person name="Burr T.J."/>
            <person name="Banta L."/>
            <person name="Dickerman A.W."/>
            <person name="Paulsen I."/>
            <person name="Otten L."/>
            <person name="Suen G."/>
            <person name="Welch R."/>
            <person name="Almeida N.F."/>
            <person name="Arnold F."/>
            <person name="Burton O.T."/>
            <person name="Du Z."/>
            <person name="Ewing A."/>
            <person name="Godsy E."/>
            <person name="Heisel S."/>
            <person name="Houmiel K.L."/>
            <person name="Jhaveri J."/>
            <person name="Lu J."/>
            <person name="Miller N.M."/>
            <person name="Norton S."/>
            <person name="Chen Q."/>
            <person name="Phoolcharoen W."/>
            <person name="Ohlin V."/>
            <person name="Ondrusek D."/>
            <person name="Pride N."/>
            <person name="Stricklin S.L."/>
            <person name="Sun J."/>
            <person name="Wheeler C."/>
            <person name="Wilson L."/>
            <person name="Zhu H."/>
            <person name="Wood D.W."/>
        </authorList>
    </citation>
    <scope>NUCLEOTIDE SEQUENCE [LARGE SCALE GENOMIC DNA]</scope>
    <source>
        <strain>ATCC BAA-846 / DSM 112012 / S4</strain>
    </source>
</reference>
<organism>
    <name type="scientific">Allorhizobium ampelinum (strain ATCC BAA-846 / DSM 112012 / S4)</name>
    <name type="common">Agrobacterium vitis (strain S4)</name>
    <dbReference type="NCBI Taxonomy" id="311402"/>
    <lineage>
        <taxon>Bacteria</taxon>
        <taxon>Pseudomonadati</taxon>
        <taxon>Pseudomonadota</taxon>
        <taxon>Alphaproteobacteria</taxon>
        <taxon>Hyphomicrobiales</taxon>
        <taxon>Rhizobiaceae</taxon>
        <taxon>Rhizobium/Agrobacterium group</taxon>
        <taxon>Allorhizobium</taxon>
        <taxon>Allorhizobium ampelinum</taxon>
    </lineage>
</organism>
<sequence>MMENNRNYLIAIALSVMVVLGWQFFYMNPRIEAQRQAEQAQQAQQAKTPATQATPGAAVNGALPGQTQASATTSREDAVAKSARVEINTEALSGSINLTGARLDDLRLKGYHETVDKTSPIITLLNPADTKDGYFAEIGFIGGEKSGSVPGPSTVWTVKDGQTLTETTPVTLTYTNETGLTFSRKISVDKHYMFTIEDTVANAGGADISLAPYGRVTRYNKPAVASTYVLHEGFIGVMGSGDGKFASVEAKYAAIEKENETNAKATGGWLGITDKYWAATLVPPQSLAYDSRFSHFTDGQARFQADYKNDPVTIAPGQSTTLKTLLFAGAKEVPVVDGYALDKSWFGQAFTNLFAGAKDTVQQYDIPRFDLLIDWGWFYFLTKPMFKLMDFFFRQVGNFGVAILLTTIAVKLLFFPLASKQYASMANMKRMQPKMEELKAKHGDDRMALQQAMMELYKTEKINPVAGCWPLLLQIPVFFALYKVIYITIEMRHAPFFGWIHDLSAPDPTSFVNLFGLLPFESPAMLHLGIWPIIMGITMFVQMRMNPTPPDPTQAMLFNWMPLVFTFMLGSFPAGLVIYWAWNNTLSVLQQSIIMKRHGVKIELFDNLKGLFQRKSAKTK</sequence>
<protein>
    <recommendedName>
        <fullName evidence="1">Membrane protein insertase YidC</fullName>
    </recommendedName>
    <alternativeName>
        <fullName evidence="1">Foldase YidC</fullName>
    </alternativeName>
    <alternativeName>
        <fullName evidence="1">Membrane integrase YidC</fullName>
    </alternativeName>
    <alternativeName>
        <fullName evidence="1">Membrane protein YidC</fullName>
    </alternativeName>
</protein>
<name>YIDC_ALLAM</name>
<dbReference type="EMBL" id="CP000633">
    <property type="protein sequence ID" value="ACM35320.1"/>
    <property type="molecule type" value="Genomic_DNA"/>
</dbReference>
<dbReference type="SMR" id="B9JZK8"/>
<dbReference type="STRING" id="311402.Avi_0455"/>
<dbReference type="KEGG" id="avi:Avi_0455"/>
<dbReference type="eggNOG" id="COG0706">
    <property type="taxonomic scope" value="Bacteria"/>
</dbReference>
<dbReference type="HOGENOM" id="CLU_016535_1_0_5"/>
<dbReference type="Proteomes" id="UP000001596">
    <property type="component" value="Chromosome 1"/>
</dbReference>
<dbReference type="GO" id="GO:0005886">
    <property type="term" value="C:plasma membrane"/>
    <property type="evidence" value="ECO:0007669"/>
    <property type="project" value="UniProtKB-SubCell"/>
</dbReference>
<dbReference type="GO" id="GO:0032977">
    <property type="term" value="F:membrane insertase activity"/>
    <property type="evidence" value="ECO:0007669"/>
    <property type="project" value="InterPro"/>
</dbReference>
<dbReference type="GO" id="GO:0051205">
    <property type="term" value="P:protein insertion into membrane"/>
    <property type="evidence" value="ECO:0007669"/>
    <property type="project" value="TreeGrafter"/>
</dbReference>
<dbReference type="GO" id="GO:0015031">
    <property type="term" value="P:protein transport"/>
    <property type="evidence" value="ECO:0007669"/>
    <property type="project" value="UniProtKB-KW"/>
</dbReference>
<dbReference type="CDD" id="cd20070">
    <property type="entry name" value="5TM_YidC_Alb3"/>
    <property type="match status" value="1"/>
</dbReference>
<dbReference type="CDD" id="cd19961">
    <property type="entry name" value="EcYidC-like_peri"/>
    <property type="match status" value="1"/>
</dbReference>
<dbReference type="Gene3D" id="2.70.98.90">
    <property type="match status" value="1"/>
</dbReference>
<dbReference type="HAMAP" id="MF_01810">
    <property type="entry name" value="YidC_type1"/>
    <property type="match status" value="1"/>
</dbReference>
<dbReference type="InterPro" id="IPR019998">
    <property type="entry name" value="Membr_insert_YidC"/>
</dbReference>
<dbReference type="InterPro" id="IPR028053">
    <property type="entry name" value="Membr_insert_YidC_N"/>
</dbReference>
<dbReference type="InterPro" id="IPR001708">
    <property type="entry name" value="YidC/ALB3/OXA1/COX18"/>
</dbReference>
<dbReference type="InterPro" id="IPR028055">
    <property type="entry name" value="YidC/Oxa/ALB_C"/>
</dbReference>
<dbReference type="InterPro" id="IPR047196">
    <property type="entry name" value="YidC_ALB_C"/>
</dbReference>
<dbReference type="InterPro" id="IPR038221">
    <property type="entry name" value="YidC_periplasmic_sf"/>
</dbReference>
<dbReference type="NCBIfam" id="NF002353">
    <property type="entry name" value="PRK01318.1-4"/>
    <property type="match status" value="1"/>
</dbReference>
<dbReference type="NCBIfam" id="TIGR03593">
    <property type="entry name" value="yidC_nterm"/>
    <property type="match status" value="1"/>
</dbReference>
<dbReference type="NCBIfam" id="TIGR03592">
    <property type="entry name" value="yidC_oxa1_cterm"/>
    <property type="match status" value="1"/>
</dbReference>
<dbReference type="PANTHER" id="PTHR12428:SF65">
    <property type="entry name" value="CYTOCHROME C OXIDASE ASSEMBLY PROTEIN COX18, MITOCHONDRIAL"/>
    <property type="match status" value="1"/>
</dbReference>
<dbReference type="PANTHER" id="PTHR12428">
    <property type="entry name" value="OXA1"/>
    <property type="match status" value="1"/>
</dbReference>
<dbReference type="Pfam" id="PF02096">
    <property type="entry name" value="60KD_IMP"/>
    <property type="match status" value="1"/>
</dbReference>
<dbReference type="Pfam" id="PF14849">
    <property type="entry name" value="YidC_periplas"/>
    <property type="match status" value="1"/>
</dbReference>
<dbReference type="PRINTS" id="PR00701">
    <property type="entry name" value="60KDINNERMP"/>
</dbReference>
<dbReference type="PRINTS" id="PR01900">
    <property type="entry name" value="YIDCPROTEIN"/>
</dbReference>
<comment type="function">
    <text evidence="1">Required for the insertion and/or proper folding and/or complex formation of integral membrane proteins into the membrane. Involved in integration of membrane proteins that insert both dependently and independently of the Sec translocase complex, as well as at least some lipoproteins. Aids folding of multispanning membrane proteins.</text>
</comment>
<comment type="subunit">
    <text evidence="1">Interacts with the Sec translocase complex via SecD. Specifically interacts with transmembrane segments of nascent integral membrane proteins during membrane integration.</text>
</comment>
<comment type="subcellular location">
    <subcellularLocation>
        <location evidence="1">Cell inner membrane</location>
        <topology evidence="1">Multi-pass membrane protein</topology>
    </subcellularLocation>
</comment>
<comment type="similarity">
    <text evidence="1">Belongs to the OXA1/ALB3/YidC family. Type 1 subfamily.</text>
</comment>
<proteinExistence type="inferred from homology"/>
<accession>B9JZK8</accession>
<evidence type="ECO:0000255" key="1">
    <source>
        <dbReference type="HAMAP-Rule" id="MF_01810"/>
    </source>
</evidence>
<evidence type="ECO:0000256" key="2">
    <source>
        <dbReference type="SAM" id="MobiDB-lite"/>
    </source>
</evidence>